<dbReference type="EMBL" id="AE008922">
    <property type="protein sequence ID" value="AAM39320.1"/>
    <property type="molecule type" value="Genomic_DNA"/>
</dbReference>
<dbReference type="RefSeq" id="NP_635396.1">
    <property type="nucleotide sequence ID" value="NC_003902.1"/>
</dbReference>
<dbReference type="RefSeq" id="WP_011035259.1">
    <property type="nucleotide sequence ID" value="NC_003902.1"/>
</dbReference>
<dbReference type="SMR" id="Q8PEH5"/>
<dbReference type="STRING" id="190485.XCC0001"/>
<dbReference type="EnsemblBacteria" id="AAM39320">
    <property type="protein sequence ID" value="AAM39320"/>
    <property type="gene ID" value="XCC0001"/>
</dbReference>
<dbReference type="GeneID" id="58011299"/>
<dbReference type="KEGG" id="xcc:XCC0001"/>
<dbReference type="PATRIC" id="fig|190485.4.peg.1"/>
<dbReference type="eggNOG" id="COG0593">
    <property type="taxonomic scope" value="Bacteria"/>
</dbReference>
<dbReference type="HOGENOM" id="CLU_026910_0_1_6"/>
<dbReference type="OrthoDB" id="9807019at2"/>
<dbReference type="Proteomes" id="UP000001010">
    <property type="component" value="Chromosome"/>
</dbReference>
<dbReference type="GO" id="GO:0005737">
    <property type="term" value="C:cytoplasm"/>
    <property type="evidence" value="ECO:0007669"/>
    <property type="project" value="UniProtKB-SubCell"/>
</dbReference>
<dbReference type="GO" id="GO:0005886">
    <property type="term" value="C:plasma membrane"/>
    <property type="evidence" value="ECO:0000318"/>
    <property type="project" value="GO_Central"/>
</dbReference>
<dbReference type="GO" id="GO:0005524">
    <property type="term" value="F:ATP binding"/>
    <property type="evidence" value="ECO:0007669"/>
    <property type="project" value="UniProtKB-UniRule"/>
</dbReference>
<dbReference type="GO" id="GO:0016887">
    <property type="term" value="F:ATP hydrolysis activity"/>
    <property type="evidence" value="ECO:0007669"/>
    <property type="project" value="InterPro"/>
</dbReference>
<dbReference type="GO" id="GO:0003688">
    <property type="term" value="F:DNA replication origin binding"/>
    <property type="evidence" value="ECO:0000318"/>
    <property type="project" value="GO_Central"/>
</dbReference>
<dbReference type="GO" id="GO:0008289">
    <property type="term" value="F:lipid binding"/>
    <property type="evidence" value="ECO:0007669"/>
    <property type="project" value="UniProtKB-KW"/>
</dbReference>
<dbReference type="GO" id="GO:0006260">
    <property type="term" value="P:DNA replication"/>
    <property type="evidence" value="ECO:0000318"/>
    <property type="project" value="GO_Central"/>
</dbReference>
<dbReference type="GO" id="GO:0006270">
    <property type="term" value="P:DNA replication initiation"/>
    <property type="evidence" value="ECO:0000318"/>
    <property type="project" value="GO_Central"/>
</dbReference>
<dbReference type="GO" id="GO:0006275">
    <property type="term" value="P:regulation of DNA replication"/>
    <property type="evidence" value="ECO:0007669"/>
    <property type="project" value="UniProtKB-UniRule"/>
</dbReference>
<dbReference type="CDD" id="cd00009">
    <property type="entry name" value="AAA"/>
    <property type="match status" value="1"/>
</dbReference>
<dbReference type="CDD" id="cd06571">
    <property type="entry name" value="Bac_DnaA_C"/>
    <property type="match status" value="1"/>
</dbReference>
<dbReference type="FunFam" id="1.10.1750.10:FF:000001">
    <property type="entry name" value="Chromosomal replication initiator protein DnaA"/>
    <property type="match status" value="1"/>
</dbReference>
<dbReference type="FunFam" id="1.10.8.60:FF:000003">
    <property type="entry name" value="Chromosomal replication initiator protein DnaA"/>
    <property type="match status" value="1"/>
</dbReference>
<dbReference type="FunFam" id="3.40.50.300:FF:000103">
    <property type="entry name" value="Chromosomal replication initiator protein DnaA"/>
    <property type="match status" value="1"/>
</dbReference>
<dbReference type="Gene3D" id="1.10.1750.10">
    <property type="match status" value="1"/>
</dbReference>
<dbReference type="Gene3D" id="1.10.8.60">
    <property type="match status" value="1"/>
</dbReference>
<dbReference type="Gene3D" id="3.30.300.180">
    <property type="match status" value="1"/>
</dbReference>
<dbReference type="Gene3D" id="3.40.50.300">
    <property type="entry name" value="P-loop containing nucleotide triphosphate hydrolases"/>
    <property type="match status" value="1"/>
</dbReference>
<dbReference type="HAMAP" id="MF_00377">
    <property type="entry name" value="DnaA_bact"/>
    <property type="match status" value="1"/>
</dbReference>
<dbReference type="InterPro" id="IPR003593">
    <property type="entry name" value="AAA+_ATPase"/>
</dbReference>
<dbReference type="InterPro" id="IPR001957">
    <property type="entry name" value="Chromosome_initiator_DnaA"/>
</dbReference>
<dbReference type="InterPro" id="IPR020591">
    <property type="entry name" value="Chromosome_initiator_DnaA-like"/>
</dbReference>
<dbReference type="InterPro" id="IPR018312">
    <property type="entry name" value="Chromosome_initiator_DnaA_CS"/>
</dbReference>
<dbReference type="InterPro" id="IPR013159">
    <property type="entry name" value="DnaA_C"/>
</dbReference>
<dbReference type="InterPro" id="IPR013317">
    <property type="entry name" value="DnaA_dom"/>
</dbReference>
<dbReference type="InterPro" id="IPR024633">
    <property type="entry name" value="DnaA_N_dom"/>
</dbReference>
<dbReference type="InterPro" id="IPR038454">
    <property type="entry name" value="DnaA_N_sf"/>
</dbReference>
<dbReference type="InterPro" id="IPR027417">
    <property type="entry name" value="P-loop_NTPase"/>
</dbReference>
<dbReference type="InterPro" id="IPR010921">
    <property type="entry name" value="Trp_repressor/repl_initiator"/>
</dbReference>
<dbReference type="NCBIfam" id="TIGR00362">
    <property type="entry name" value="DnaA"/>
    <property type="match status" value="1"/>
</dbReference>
<dbReference type="PANTHER" id="PTHR30050">
    <property type="entry name" value="CHROMOSOMAL REPLICATION INITIATOR PROTEIN DNAA"/>
    <property type="match status" value="1"/>
</dbReference>
<dbReference type="PANTHER" id="PTHR30050:SF2">
    <property type="entry name" value="CHROMOSOMAL REPLICATION INITIATOR PROTEIN DNAA"/>
    <property type="match status" value="1"/>
</dbReference>
<dbReference type="Pfam" id="PF00308">
    <property type="entry name" value="Bac_DnaA"/>
    <property type="match status" value="1"/>
</dbReference>
<dbReference type="Pfam" id="PF08299">
    <property type="entry name" value="Bac_DnaA_C"/>
    <property type="match status" value="1"/>
</dbReference>
<dbReference type="Pfam" id="PF11638">
    <property type="entry name" value="DnaA_N"/>
    <property type="match status" value="1"/>
</dbReference>
<dbReference type="PRINTS" id="PR00051">
    <property type="entry name" value="DNAA"/>
</dbReference>
<dbReference type="SMART" id="SM00382">
    <property type="entry name" value="AAA"/>
    <property type="match status" value="1"/>
</dbReference>
<dbReference type="SMART" id="SM00760">
    <property type="entry name" value="Bac_DnaA_C"/>
    <property type="match status" value="1"/>
</dbReference>
<dbReference type="SUPFAM" id="SSF52540">
    <property type="entry name" value="P-loop containing nucleoside triphosphate hydrolases"/>
    <property type="match status" value="1"/>
</dbReference>
<dbReference type="SUPFAM" id="SSF48295">
    <property type="entry name" value="TrpR-like"/>
    <property type="match status" value="1"/>
</dbReference>
<dbReference type="PROSITE" id="PS01008">
    <property type="entry name" value="DNAA"/>
    <property type="match status" value="1"/>
</dbReference>
<keyword id="KW-0067">ATP-binding</keyword>
<keyword id="KW-0963">Cytoplasm</keyword>
<keyword id="KW-0235">DNA replication</keyword>
<keyword id="KW-0238">DNA-binding</keyword>
<keyword id="KW-0446">Lipid-binding</keyword>
<keyword id="KW-0547">Nucleotide-binding</keyword>
<keyword id="KW-1185">Reference proteome</keyword>
<organism>
    <name type="scientific">Xanthomonas campestris pv. campestris (strain ATCC 33913 / DSM 3586 / NCPPB 528 / LMG 568 / P 25)</name>
    <dbReference type="NCBI Taxonomy" id="190485"/>
    <lineage>
        <taxon>Bacteria</taxon>
        <taxon>Pseudomonadati</taxon>
        <taxon>Pseudomonadota</taxon>
        <taxon>Gammaproteobacteria</taxon>
        <taxon>Lysobacterales</taxon>
        <taxon>Lysobacteraceae</taxon>
        <taxon>Xanthomonas</taxon>
    </lineage>
</organism>
<reference key="1">
    <citation type="journal article" date="2002" name="Nature">
        <title>Comparison of the genomes of two Xanthomonas pathogens with differing host specificities.</title>
        <authorList>
            <person name="da Silva A.C.R."/>
            <person name="Ferro J.A."/>
            <person name="Reinach F.C."/>
            <person name="Farah C.S."/>
            <person name="Furlan L.R."/>
            <person name="Quaggio R.B."/>
            <person name="Monteiro-Vitorello C.B."/>
            <person name="Van Sluys M.A."/>
            <person name="Almeida N.F. Jr."/>
            <person name="Alves L.M.C."/>
            <person name="do Amaral A.M."/>
            <person name="Bertolini M.C."/>
            <person name="Camargo L.E.A."/>
            <person name="Camarotte G."/>
            <person name="Cannavan F."/>
            <person name="Cardozo J."/>
            <person name="Chambergo F."/>
            <person name="Ciapina L.P."/>
            <person name="Cicarelli R.M.B."/>
            <person name="Coutinho L.L."/>
            <person name="Cursino-Santos J.R."/>
            <person name="El-Dorry H."/>
            <person name="Faria J.B."/>
            <person name="Ferreira A.J.S."/>
            <person name="Ferreira R.C.C."/>
            <person name="Ferro M.I.T."/>
            <person name="Formighieri E.F."/>
            <person name="Franco M.C."/>
            <person name="Greggio C.C."/>
            <person name="Gruber A."/>
            <person name="Katsuyama A.M."/>
            <person name="Kishi L.T."/>
            <person name="Leite R.P."/>
            <person name="Lemos E.G.M."/>
            <person name="Lemos M.V.F."/>
            <person name="Locali E.C."/>
            <person name="Machado M.A."/>
            <person name="Madeira A.M.B.N."/>
            <person name="Martinez-Rossi N.M."/>
            <person name="Martins E.C."/>
            <person name="Meidanis J."/>
            <person name="Menck C.F.M."/>
            <person name="Miyaki C.Y."/>
            <person name="Moon D.H."/>
            <person name="Moreira L.M."/>
            <person name="Novo M.T.M."/>
            <person name="Okura V.K."/>
            <person name="Oliveira M.C."/>
            <person name="Oliveira V.R."/>
            <person name="Pereira H.A."/>
            <person name="Rossi A."/>
            <person name="Sena J.A.D."/>
            <person name="Silva C."/>
            <person name="de Souza R.F."/>
            <person name="Spinola L.A.F."/>
            <person name="Takita M.A."/>
            <person name="Tamura R.E."/>
            <person name="Teixeira E.C."/>
            <person name="Tezza R.I.D."/>
            <person name="Trindade dos Santos M."/>
            <person name="Truffi D."/>
            <person name="Tsai S.M."/>
            <person name="White F.F."/>
            <person name="Setubal J.C."/>
            <person name="Kitajima J.P."/>
        </authorList>
    </citation>
    <scope>NUCLEOTIDE SEQUENCE [LARGE SCALE GENOMIC DNA]</scope>
    <source>
        <strain>ATCC 33913 / DSM 3586 / NCPPB 528 / LMG 568 / P 25</strain>
    </source>
</reference>
<comment type="function">
    <text evidence="1">Plays an essential role in the initiation and regulation of chromosomal replication. ATP-DnaA binds to the origin of replication (oriC) to initiate formation of the DNA replication initiation complex once per cell cycle. Binds the DnaA box (a 9 base pair repeat at the origin) and separates the double-stranded (ds)DNA. Forms a right-handed helical filament on oriC DNA; dsDNA binds to the exterior of the filament while single-stranded (ss)DNA is stabiized in the filament's interior. The ATP-DnaA-oriC complex binds and stabilizes one strand of the AT-rich DNA unwinding element (DUE), permitting loading of DNA polymerase. After initiation quickly degrades to an ADP-DnaA complex that is not apt for DNA replication. Binds acidic phospholipids.</text>
</comment>
<comment type="subunit">
    <text evidence="1">Oligomerizes as a right-handed, spiral filament on DNA at oriC.</text>
</comment>
<comment type="subcellular location">
    <subcellularLocation>
        <location evidence="1">Cytoplasm</location>
    </subcellularLocation>
</comment>
<comment type="domain">
    <text evidence="1">Domain I is involved in oligomerization and binding regulators, domain II is flexibile and of varying length in different bacteria, domain III forms the AAA+ region, while domain IV binds dsDNA.</text>
</comment>
<comment type="similarity">
    <text evidence="1">Belongs to the DnaA family.</text>
</comment>
<protein>
    <recommendedName>
        <fullName evidence="1">Chromosomal replication initiator protein DnaA</fullName>
    </recommendedName>
</protein>
<proteinExistence type="inferred from homology"/>
<gene>
    <name evidence="1" type="primary">dnaA</name>
    <name type="ordered locus">XCC0001</name>
</gene>
<accession>Q8PEH5</accession>
<name>DNAA_XANCP</name>
<evidence type="ECO:0000255" key="1">
    <source>
        <dbReference type="HAMAP-Rule" id="MF_00377"/>
    </source>
</evidence>
<feature type="chain" id="PRO_0000114306" description="Chromosomal replication initiator protein DnaA">
    <location>
        <begin position="1"/>
        <end position="442"/>
    </location>
</feature>
<feature type="region of interest" description="Domain I, interacts with DnaA modulators" evidence="1">
    <location>
        <begin position="1"/>
        <end position="75"/>
    </location>
</feature>
<feature type="region of interest" description="Domain II" evidence="1">
    <location>
        <begin position="75"/>
        <end position="104"/>
    </location>
</feature>
<feature type="region of interest" description="Domain III, AAA+ region" evidence="1">
    <location>
        <begin position="105"/>
        <end position="322"/>
    </location>
</feature>
<feature type="region of interest" description="Domain IV, binds dsDNA" evidence="1">
    <location>
        <begin position="323"/>
        <end position="442"/>
    </location>
</feature>
<feature type="binding site" evidence="1">
    <location>
        <position position="150"/>
    </location>
    <ligand>
        <name>ATP</name>
        <dbReference type="ChEBI" id="CHEBI:30616"/>
    </ligand>
</feature>
<feature type="binding site" evidence="1">
    <location>
        <position position="152"/>
    </location>
    <ligand>
        <name>ATP</name>
        <dbReference type="ChEBI" id="CHEBI:30616"/>
    </ligand>
</feature>
<feature type="binding site" evidence="1">
    <location>
        <position position="153"/>
    </location>
    <ligand>
        <name>ATP</name>
        <dbReference type="ChEBI" id="CHEBI:30616"/>
    </ligand>
</feature>
<feature type="binding site" evidence="1">
    <location>
        <position position="154"/>
    </location>
    <ligand>
        <name>ATP</name>
        <dbReference type="ChEBI" id="CHEBI:30616"/>
    </ligand>
</feature>
<sequence length="442" mass="49527">MDAWPRCLERLEAEFPPEDVHTWLKPLQAEDRGDSIVLYAPNAFIVEQVRERYLPRIRELLAYFAGNGEVALAVGSRPRAPEPLPAPQAVASAPAAAPIVPFAGNLDSHYTFANFVEGRSNQLGLAAAIQAAQKPGDRAHNPLLLYGSTGLGKTHLMFAAGNALRQANPAAKVMYLRSEQFFSAMIRALQDKAMDQFKRQFQQIDALLIDDIQFFAGKDRTQEEFFHTFNALFDGRQQIILTCDRYPREVEGLEPRLKSRLAWGLSVAIDPPDFETRAAIVLAKARERGAEIPDDVAFLIAKKMRSNVRDLEGALNTLVARANFTGRSITVEFAQETLRDLLRAQQQAIGIPNIQKTVADYYGLQMKDLLSKRRTRSLARPRQVAMALAKELTEHSLPEIGDAFAGRDHTTVLHACRQIRTLMEADGKLREDWEKLIRKLSE</sequence>